<accession>P0C9K1</accession>
<keyword id="KW-1043">Host membrane</keyword>
<keyword id="KW-0472">Membrane</keyword>
<keyword id="KW-0812">Transmembrane</keyword>
<keyword id="KW-1133">Transmembrane helix</keyword>
<sequence>MGGGGDHQQLSIKQYCLYFIIGIAYTDCFICALCKNLRLSTTMKLFVLLSILVWLAQPVLNRPLSIFYTKQILPRTYTPPMRELEYWCTYGKHCDFCWDCKNGICKNKVLDDMPLIVQNDYISKCSITRFIDRCMYFIEPKIPYIHYMNCSLPTYFS</sequence>
<reference key="1">
    <citation type="submission" date="2003-03" db="EMBL/GenBank/DDBJ databases">
        <title>African swine fever virus genomes.</title>
        <authorList>
            <person name="Kutish G.F."/>
            <person name="Rock D.L."/>
        </authorList>
    </citation>
    <scope>NUCLEOTIDE SEQUENCE [LARGE SCALE GENOMIC DNA]</scope>
</reference>
<organism>
    <name type="scientific">African swine fever virus (isolate Tick/Malawi/Lil 20-1/1983)</name>
    <name type="common">ASFV</name>
    <dbReference type="NCBI Taxonomy" id="10500"/>
    <lineage>
        <taxon>Viruses</taxon>
        <taxon>Varidnaviria</taxon>
        <taxon>Bamfordvirae</taxon>
        <taxon>Nucleocytoviricota</taxon>
        <taxon>Pokkesviricetes</taxon>
        <taxon>Asfuvirales</taxon>
        <taxon>Asfarviridae</taxon>
        <taxon>Asfivirus</taxon>
        <taxon>African swine fever virus</taxon>
    </lineage>
</organism>
<dbReference type="EMBL" id="AY261361">
    <property type="status" value="NOT_ANNOTATED_CDS"/>
    <property type="molecule type" value="Genomic_DNA"/>
</dbReference>
<dbReference type="Proteomes" id="UP000000860">
    <property type="component" value="Segment"/>
</dbReference>
<dbReference type="GO" id="GO:0033644">
    <property type="term" value="C:host cell membrane"/>
    <property type="evidence" value="ECO:0007669"/>
    <property type="project" value="UniProtKB-SubCell"/>
</dbReference>
<dbReference type="GO" id="GO:0016020">
    <property type="term" value="C:membrane"/>
    <property type="evidence" value="ECO:0007669"/>
    <property type="project" value="UniProtKB-KW"/>
</dbReference>
<dbReference type="InterPro" id="IPR004848">
    <property type="entry name" value="ASFV_fam_110"/>
</dbReference>
<dbReference type="Pfam" id="PF01639">
    <property type="entry name" value="v110"/>
    <property type="match status" value="1"/>
</dbReference>
<evidence type="ECO:0000250" key="1"/>
<evidence type="ECO:0000255" key="2"/>
<evidence type="ECO:0000305" key="3"/>
<organismHost>
    <name type="scientific">Ornithodoros</name>
    <name type="common">relapsing fever ticks</name>
    <dbReference type="NCBI Taxonomy" id="6937"/>
</organismHost>
<organismHost>
    <name type="scientific">Phacochoerus aethiopicus</name>
    <name type="common">Warthog</name>
    <dbReference type="NCBI Taxonomy" id="85517"/>
</organismHost>
<organismHost>
    <name type="scientific">Phacochoerus africanus</name>
    <name type="common">Warthog</name>
    <dbReference type="NCBI Taxonomy" id="41426"/>
</organismHost>
<organismHost>
    <name type="scientific">Potamochoerus larvatus</name>
    <name type="common">Bushpig</name>
    <dbReference type="NCBI Taxonomy" id="273792"/>
</organismHost>
<organismHost>
    <name type="scientific">Sus scrofa</name>
    <name type="common">Pig</name>
    <dbReference type="NCBI Taxonomy" id="9823"/>
</organismHost>
<protein>
    <recommendedName>
        <fullName>Protein MGF 110-13L</fullName>
    </recommendedName>
</protein>
<feature type="chain" id="PRO_0000373223" description="Protein MGF 110-13L">
    <location>
        <begin position="1"/>
        <end position="157"/>
    </location>
</feature>
<feature type="transmembrane region" description="Helical" evidence="2">
    <location>
        <begin position="14"/>
        <end position="34"/>
    </location>
</feature>
<feature type="transmembrane region" description="Helical" evidence="2">
    <location>
        <begin position="39"/>
        <end position="59"/>
    </location>
</feature>
<proteinExistence type="inferred from homology"/>
<comment type="function">
    <text evidence="1">Plays a role in virus cell tropism, and may be required for efficient virus replication in macrophages.</text>
</comment>
<comment type="subcellular location">
    <subcellularLocation>
        <location evidence="3">Host membrane</location>
        <topology evidence="3">Multi-pass membrane protein</topology>
    </subcellularLocation>
</comment>
<comment type="similarity">
    <text evidence="3">Belongs to the asfivirus MGF 110 family.</text>
</comment>
<name>11013_ASFM2</name>
<gene>
    <name type="ordered locus">Mal-018</name>
</gene>